<dbReference type="EMBL" id="L04640">
    <property type="protein sequence ID" value="AAA49386.1"/>
    <property type="molecule type" value="mRNA"/>
</dbReference>
<dbReference type="PIR" id="A44335">
    <property type="entry name" value="A44335"/>
</dbReference>
<dbReference type="SMR" id="Q02454"/>
<dbReference type="GO" id="GO:0005576">
    <property type="term" value="C:extracellular region"/>
    <property type="evidence" value="ECO:0007669"/>
    <property type="project" value="UniProtKB-SubCell"/>
</dbReference>
<dbReference type="GO" id="GO:0016020">
    <property type="term" value="C:membrane"/>
    <property type="evidence" value="ECO:0007669"/>
    <property type="project" value="UniProtKB-KW"/>
</dbReference>
<dbReference type="GO" id="GO:0044218">
    <property type="term" value="C:other organism cell membrane"/>
    <property type="evidence" value="ECO:0007669"/>
    <property type="project" value="UniProtKB-KW"/>
</dbReference>
<dbReference type="GO" id="GO:0090729">
    <property type="term" value="F:toxin activity"/>
    <property type="evidence" value="ECO:0007669"/>
    <property type="project" value="UniProtKB-KW"/>
</dbReference>
<dbReference type="GO" id="GO:0031640">
    <property type="term" value="P:killing of cells of another organism"/>
    <property type="evidence" value="ECO:0007669"/>
    <property type="project" value="UniProtKB-KW"/>
</dbReference>
<dbReference type="CDD" id="cd00206">
    <property type="entry name" value="TFP_snake_toxin"/>
    <property type="match status" value="1"/>
</dbReference>
<dbReference type="FunFam" id="2.10.60.10:FF:000024">
    <property type="entry name" value="Cytotoxin 1"/>
    <property type="match status" value="1"/>
</dbReference>
<dbReference type="Gene3D" id="2.10.60.10">
    <property type="entry name" value="CD59"/>
    <property type="match status" value="1"/>
</dbReference>
<dbReference type="InterPro" id="IPR003572">
    <property type="entry name" value="Cytotoxin_Cobra"/>
</dbReference>
<dbReference type="InterPro" id="IPR003571">
    <property type="entry name" value="Snake_3FTx"/>
</dbReference>
<dbReference type="InterPro" id="IPR045860">
    <property type="entry name" value="Snake_toxin-like_sf"/>
</dbReference>
<dbReference type="InterPro" id="IPR018354">
    <property type="entry name" value="Snake_toxin_con_site"/>
</dbReference>
<dbReference type="InterPro" id="IPR054131">
    <property type="entry name" value="Toxin_cobra-type"/>
</dbReference>
<dbReference type="Pfam" id="PF21947">
    <property type="entry name" value="Toxin_cobra-type"/>
    <property type="match status" value="1"/>
</dbReference>
<dbReference type="PRINTS" id="PR00282">
    <property type="entry name" value="CYTOTOXIN"/>
</dbReference>
<dbReference type="SUPFAM" id="SSF57302">
    <property type="entry name" value="Snake toxin-like"/>
    <property type="match status" value="1"/>
</dbReference>
<dbReference type="PROSITE" id="PS00272">
    <property type="entry name" value="SNAKE_TOXIN"/>
    <property type="match status" value="1"/>
</dbReference>
<name>3SA0_NAJSP</name>
<comment type="function">
    <text evidence="2 3">Shows cytolytic activity on many different cells by forming pore in lipid membranes. In vivo, increases heart rate or kills the animal by cardiac arrest. In addition, it binds to heparin with high affinity, interacts with Kv channel-interacting protein 1 (KCNIP1) in a calcium-independent manner, and binds to integrin alpha-V/beta-3 (ITGAV/ITGB3) with moderate affinity.</text>
</comment>
<comment type="subunit">
    <text evidence="2">Monomer in solution; Homodimer and oligomer in the presence of negatively charged lipids forming a pore with a size ranging between 20 and 30 Angstroms.</text>
</comment>
<comment type="subcellular location">
    <subcellularLocation>
        <location evidence="1">Secreted</location>
    </subcellularLocation>
    <subcellularLocation>
        <location evidence="2">Target cell membrane</location>
    </subcellularLocation>
</comment>
<comment type="tissue specificity">
    <text evidence="5">Expressed by the venom gland.</text>
</comment>
<comment type="miscellaneous">
    <text evidence="5">Is classified as a P-type cytotoxin, since a proline residue stands at position 51 (Pro-31 in standard classification).</text>
</comment>
<comment type="similarity">
    <text evidence="5">Belongs to the three-finger toxin family. Short-chain subfamily. Type IA cytotoxin sub-subfamily.</text>
</comment>
<organism>
    <name type="scientific">Naja sputatrix</name>
    <name type="common">Malayan spitting cobra</name>
    <name type="synonym">Naja naja sputatrix</name>
    <dbReference type="NCBI Taxonomy" id="33626"/>
    <lineage>
        <taxon>Eukaryota</taxon>
        <taxon>Metazoa</taxon>
        <taxon>Chordata</taxon>
        <taxon>Craniata</taxon>
        <taxon>Vertebrata</taxon>
        <taxon>Euteleostomi</taxon>
        <taxon>Lepidosauria</taxon>
        <taxon>Squamata</taxon>
        <taxon>Bifurcata</taxon>
        <taxon>Unidentata</taxon>
        <taxon>Episquamata</taxon>
        <taxon>Toxicofera</taxon>
        <taxon>Serpentes</taxon>
        <taxon>Colubroidea</taxon>
        <taxon>Elapidae</taxon>
        <taxon>Elapinae</taxon>
        <taxon>Naja</taxon>
    </lineage>
</organism>
<sequence length="81" mass="9098">MKTLLLTTVVVTIVCLDLEYTLKCNKLVPLFYKTCPAGKNLCYKMFMVATPKVPVKRGCIDVCPKSSLLVKYVCCNTDRCN</sequence>
<reference key="1">
    <citation type="journal article" date="1993" name="Toxicon">
        <title>Molecular cloning of a cardiotoxin structural gene from Malayan spitting cobra (Naja naja sputatrix).</title>
        <authorList>
            <person name="Yeo M.S."/>
            <person name="Jeyaseelan K."/>
            <person name="Chung M.C."/>
            <person name="Gopalakrishnakone P."/>
            <person name="Tan C.H."/>
            <person name="Wong H.A."/>
        </authorList>
    </citation>
    <scope>NUCLEOTIDE SEQUENCE [MRNA]</scope>
    <source>
        <tissue>Venom gland</tissue>
    </source>
</reference>
<accession>Q02454</accession>
<keyword id="KW-0123">Cardiotoxin</keyword>
<keyword id="KW-0204">Cytolysis</keyword>
<keyword id="KW-1015">Disulfide bond</keyword>
<keyword id="KW-0472">Membrane</keyword>
<keyword id="KW-0964">Secreted</keyword>
<keyword id="KW-0732">Signal</keyword>
<keyword id="KW-1052">Target cell membrane</keyword>
<keyword id="KW-1053">Target membrane</keyword>
<keyword id="KW-0800">Toxin</keyword>
<evidence type="ECO:0000250" key="1"/>
<evidence type="ECO:0000250" key="2">
    <source>
        <dbReference type="UniProtKB" id="P60301"/>
    </source>
</evidence>
<evidence type="ECO:0000250" key="3">
    <source>
        <dbReference type="UniProtKB" id="P60304"/>
    </source>
</evidence>
<evidence type="ECO:0000255" key="4"/>
<evidence type="ECO:0000305" key="5"/>
<proteinExistence type="inferred from homology"/>
<protein>
    <recommendedName>
        <fullName>Cytotoxin</fullName>
        <shortName>CTX</shortName>
    </recommendedName>
    <alternativeName>
        <fullName>Cardiotoxin</fullName>
    </alternativeName>
</protein>
<feature type="signal peptide" evidence="4">
    <location>
        <begin position="1"/>
        <end position="21"/>
    </location>
</feature>
<feature type="chain" id="PRO_0000035392" description="Cytotoxin">
    <location>
        <begin position="22"/>
        <end position="81"/>
    </location>
</feature>
<feature type="disulfide bond" evidence="2">
    <location>
        <begin position="24"/>
        <end position="42"/>
    </location>
</feature>
<feature type="disulfide bond" evidence="2">
    <location>
        <begin position="35"/>
        <end position="59"/>
    </location>
</feature>
<feature type="disulfide bond" evidence="2">
    <location>
        <begin position="63"/>
        <end position="74"/>
    </location>
</feature>
<feature type="disulfide bond" evidence="2">
    <location>
        <begin position="75"/>
        <end position="80"/>
    </location>
</feature>